<protein>
    <recommendedName>
        <fullName evidence="2">Small ribosomal subunit protein uS4c</fullName>
    </recommendedName>
    <alternativeName>
        <fullName>30S ribosomal protein S4, chloroplastic</fullName>
    </alternativeName>
</protein>
<gene>
    <name type="primary">rps4</name>
</gene>
<reference key="1">
    <citation type="journal article" date="2000" name="Plant Mol. Biol. Rep.">
        <title>Chinese spring wheat (Triticum aestivum L.) chloroplast genome: complete sequence and contig clones.</title>
        <authorList>
            <person name="Ogihara Y."/>
            <person name="Isono K."/>
            <person name="Kojima T."/>
            <person name="Endo A."/>
            <person name="Hanaoka M."/>
            <person name="Shiina T."/>
            <person name="Terachi T."/>
            <person name="Utsugi S."/>
            <person name="Murata M."/>
            <person name="Mori N."/>
            <person name="Takumi S."/>
            <person name="Ikeo K."/>
            <person name="Gojobori T."/>
            <person name="Murai R."/>
            <person name="Murai K."/>
            <person name="Matsuoka Y."/>
            <person name="Ohnishi Y."/>
            <person name="Tajiri H."/>
            <person name="Tsunewaki K."/>
        </authorList>
    </citation>
    <scope>NUCLEOTIDE SEQUENCE [LARGE SCALE GENOMIC DNA]</scope>
    <source>
        <strain>cv. Chinese Spring</strain>
    </source>
</reference>
<evidence type="ECO:0000250" key="1"/>
<evidence type="ECO:0000305" key="2"/>
<dbReference type="EMBL" id="AB042240">
    <property type="protein sequence ID" value="BAB47036.1"/>
    <property type="molecule type" value="Genomic_DNA"/>
</dbReference>
<dbReference type="RefSeq" id="NP_114261.1">
    <property type="nucleotide sequence ID" value="NC_002762.1"/>
</dbReference>
<dbReference type="SMR" id="Q95H61"/>
<dbReference type="STRING" id="4565.Q95H61"/>
<dbReference type="PaxDb" id="4565-EPlTAEP00000010004"/>
<dbReference type="EnsemblPlants" id="TraesARI3D03G01843390.1">
    <property type="protein sequence ID" value="TraesARI3D03G01843390.1.CDS1"/>
    <property type="gene ID" value="TraesARI3D03G01843390"/>
</dbReference>
<dbReference type="EnsemblPlants" id="TraesCS3D02G057700.1">
    <property type="protein sequence ID" value="TraesCS3D02G057700.1.cds1"/>
    <property type="gene ID" value="TraesCS3D02G057700"/>
</dbReference>
<dbReference type="EnsemblPlants" id="TraesCS3D03G0108400.1">
    <property type="protein sequence ID" value="TraesCS3D03G0108400.1.CDS1"/>
    <property type="gene ID" value="TraesCS3D03G0108400"/>
</dbReference>
<dbReference type="EnsemblPlants" id="TraesJAG3D03G01816260.1">
    <property type="protein sequence ID" value="TraesJAG3D03G01816260.1.CDS1"/>
    <property type="gene ID" value="TraesJAG3D03G01816260"/>
</dbReference>
<dbReference type="EnsemblPlants" id="TraesKAR3D01G0037470.1">
    <property type="protein sequence ID" value="cds.TraesKAR3D01G0037470.1"/>
    <property type="gene ID" value="TraesKAR3D01G0037470"/>
</dbReference>
<dbReference type="EnsemblPlants" id="TraesKAR7A01G0472660.1">
    <property type="protein sequence ID" value="cds.TraesKAR7A01G0472660.1"/>
    <property type="gene ID" value="TraesKAR7A01G0472660"/>
</dbReference>
<dbReference type="EnsemblPlants" id="TraesKARUn01G0026530.1">
    <property type="protein sequence ID" value="cds.TraesKARUn01G0026530.1"/>
    <property type="gene ID" value="TraesKARUn01G0026530"/>
</dbReference>
<dbReference type="EnsemblPlants" id="TraesKARUn01G0028080.1">
    <property type="protein sequence ID" value="cds.TraesKARUn01G0028080.1"/>
    <property type="gene ID" value="TraesKARUn01G0028080"/>
</dbReference>
<dbReference type="EnsemblPlants" id="TraesKARUn01G0028440.1">
    <property type="protein sequence ID" value="cds.TraesKARUn01G0028440.1"/>
    <property type="gene ID" value="TraesKARUn01G0028440"/>
</dbReference>
<dbReference type="EnsemblPlants" id="TraesKARUn01G0029910.1">
    <property type="protein sequence ID" value="cds.TraesKARUn01G0029910.1"/>
    <property type="gene ID" value="TraesKARUn01G0029910"/>
</dbReference>
<dbReference type="EnsemblPlants" id="TraesKARUn01G0030390.1">
    <property type="protein sequence ID" value="cds.TraesKARUn01G0030390.1"/>
    <property type="gene ID" value="TraesKARUn01G0030390"/>
</dbReference>
<dbReference type="EnsemblPlants" id="TraesKARUn01G0030520.1">
    <property type="protein sequence ID" value="cds.TraesKARUn01G0030520.1"/>
    <property type="gene ID" value="TraesKARUn01G0030520"/>
</dbReference>
<dbReference type="EnsemblPlants" id="TraesKARUn01G0033520.1">
    <property type="protein sequence ID" value="cds.TraesKARUn01G0033520.1"/>
    <property type="gene ID" value="TraesKARUn01G0033520"/>
</dbReference>
<dbReference type="EnsemblPlants" id="TraesKARUn01G0033850.1">
    <property type="protein sequence ID" value="cds.TraesKARUn01G0033850.1"/>
    <property type="gene ID" value="TraesKARUn01G0033850"/>
</dbReference>
<dbReference type="EnsemblPlants" id="TraesKARUn01G0034440.1">
    <property type="protein sequence ID" value="cds.TraesKARUn01G0034440.1"/>
    <property type="gene ID" value="TraesKARUn01G0034440"/>
</dbReference>
<dbReference type="EnsemblPlants" id="TraesKARUn01G0035350.1">
    <property type="protein sequence ID" value="cds.TraesKARUn01G0035350.1"/>
    <property type="gene ID" value="TraesKARUn01G0035350"/>
</dbReference>
<dbReference type="EnsemblPlants" id="TraesKARUn01G0036110.1">
    <property type="protein sequence ID" value="cds.TraesKARUn01G0036110.1"/>
    <property type="gene ID" value="TraesKARUn01G0036110"/>
</dbReference>
<dbReference type="EnsemblPlants" id="TraesKARUn01G0036430.1">
    <property type="protein sequence ID" value="cds.TraesKARUn01G0036430.1"/>
    <property type="gene ID" value="TraesKARUn01G0036430"/>
</dbReference>
<dbReference type="EnsemblPlants" id="TraesKARUn01G0036720.1">
    <property type="protein sequence ID" value="cds.TraesKARUn01G0036720.1"/>
    <property type="gene ID" value="TraesKARUn01G0036720"/>
</dbReference>
<dbReference type="EnsemblPlants" id="TraesKARUn01G0061910.1">
    <property type="protein sequence ID" value="cds.TraesKARUn01G0061910.1"/>
    <property type="gene ID" value="TraesKARUn01G0061910"/>
</dbReference>
<dbReference type="EnsemblPlants" id="TraesKARUn01G0066250.1">
    <property type="protein sequence ID" value="cds.TraesKARUn01G0066250.1"/>
    <property type="gene ID" value="TraesKARUn01G0066250"/>
</dbReference>
<dbReference type="EnsemblPlants" id="TraesKARUn01G0068330.1">
    <property type="protein sequence ID" value="cds.TraesKARUn01G0068330.1"/>
    <property type="gene ID" value="TraesKARUn01G0068330"/>
</dbReference>
<dbReference type="EnsemblPlants" id="TraesKARUn01G0068540.1">
    <property type="protein sequence ID" value="cds.TraesKARUn01G0068540.1"/>
    <property type="gene ID" value="TraesKARUn01G0068540"/>
</dbReference>
<dbReference type="EnsemblPlants" id="TraesKARUn01G0068720.1">
    <property type="protein sequence ID" value="cds.TraesKARUn01G0068720.1"/>
    <property type="gene ID" value="TraesKARUn01G0068720"/>
</dbReference>
<dbReference type="EnsemblPlants" id="TraesKARUn01G0068770.1">
    <property type="protein sequence ID" value="cds.TraesKARUn01G0068770.1"/>
    <property type="gene ID" value="TraesKARUn01G0068770"/>
</dbReference>
<dbReference type="EnsemblPlants" id="TraesKARUn01G0068930.1">
    <property type="protein sequence ID" value="cds.TraesKARUn01G0068930.1"/>
    <property type="gene ID" value="TraesKARUn01G0068930"/>
</dbReference>
<dbReference type="EnsemblPlants" id="TraesKARUn01G0069210.1">
    <property type="protein sequence ID" value="cds.TraesKARUn01G0069210.1"/>
    <property type="gene ID" value="TraesKARUn01G0069210"/>
</dbReference>
<dbReference type="EnsemblPlants" id="TraesKARUn01G0069380.1">
    <property type="protein sequence ID" value="cds.TraesKARUn01G0069380.1"/>
    <property type="gene ID" value="TraesKARUn01G0069380"/>
</dbReference>
<dbReference type="EnsemblPlants" id="TraesKARUn01G0071340.1">
    <property type="protein sequence ID" value="cds.TraesKARUn01G0071340.1"/>
    <property type="gene ID" value="TraesKARUn01G0071340"/>
</dbReference>
<dbReference type="EnsemblPlants" id="TraesKARUn01G0073080.1">
    <property type="protein sequence ID" value="cds.TraesKARUn01G0073080.1"/>
    <property type="gene ID" value="TraesKARUn01G0073080"/>
</dbReference>
<dbReference type="EnsemblPlants" id="TraesKARUn01G0074120.1">
    <property type="protein sequence ID" value="cds.TraesKARUn01G0074120.1"/>
    <property type="gene ID" value="TraesKARUn01G0074120"/>
</dbReference>
<dbReference type="EnsemblPlants" id="TraesKARUn01G0075800.1">
    <property type="protein sequence ID" value="cds.TraesKARUn01G0075800.1"/>
    <property type="gene ID" value="TraesKARUn01G0075800"/>
</dbReference>
<dbReference type="EnsemblPlants" id="TraesKARUn01G0075860.1">
    <property type="protein sequence ID" value="cds.TraesKARUn01G0075860.1"/>
    <property type="gene ID" value="TraesKARUn01G0075860"/>
</dbReference>
<dbReference type="EnsemblPlants" id="TraesKARUn01G0076090.1">
    <property type="protein sequence ID" value="cds.TraesKARUn01G0076090.1"/>
    <property type="gene ID" value="TraesKARUn01G0076090"/>
</dbReference>
<dbReference type="EnsemblPlants" id="TraesKARUn01G0081140.1">
    <property type="protein sequence ID" value="cds.TraesKARUn01G0081140.1"/>
    <property type="gene ID" value="TraesKARUn01G0081140"/>
</dbReference>
<dbReference type="EnsemblPlants" id="TraesKARUn01G0085690.1">
    <property type="protein sequence ID" value="cds.TraesKARUn01G0085690.1"/>
    <property type="gene ID" value="TraesKARUn01G0085690"/>
</dbReference>
<dbReference type="EnsemblPlants" id="TraesKARUn01G0086780.1">
    <property type="protein sequence ID" value="cds.TraesKARUn01G0086780.1"/>
    <property type="gene ID" value="TraesKARUn01G0086780"/>
</dbReference>
<dbReference type="EnsemblPlants" id="TraesKARUn01G0088230.1">
    <property type="protein sequence ID" value="cds.TraesKARUn01G0088230.1"/>
    <property type="gene ID" value="TraesKARUn01G0088230"/>
</dbReference>
<dbReference type="EnsemblPlants" id="TraesKARUn01G0088900.1">
    <property type="protein sequence ID" value="cds.TraesKARUn01G0088900.1"/>
    <property type="gene ID" value="TraesKARUn01G0088900"/>
</dbReference>
<dbReference type="EnsemblPlants" id="TraesKARUn01G0089180.1">
    <property type="protein sequence ID" value="cds.TraesKARUn01G0089180.1"/>
    <property type="gene ID" value="TraesKARUn01G0089180"/>
</dbReference>
<dbReference type="EnsemblPlants" id="TraesKARUn01G0089250.1">
    <property type="protein sequence ID" value="cds.TraesKARUn01G0089250.1"/>
    <property type="gene ID" value="TraesKARUn01G0089250"/>
</dbReference>
<dbReference type="EnsemblPlants" id="TraesKARUn01G0089610.1">
    <property type="protein sequence ID" value="cds.TraesKARUn01G0089610.1"/>
    <property type="gene ID" value="TraesKARUn01G0089610"/>
</dbReference>
<dbReference type="EnsemblPlants" id="TraesKARUn01G0092160.1">
    <property type="protein sequence ID" value="cds.TraesKARUn01G0092160.1"/>
    <property type="gene ID" value="TraesKARUn01G0092160"/>
</dbReference>
<dbReference type="EnsemblPlants" id="TraesKARUn01G0095820.1">
    <property type="protein sequence ID" value="cds.TraesKARUn01G0095820.1"/>
    <property type="gene ID" value="TraesKARUn01G0095820"/>
</dbReference>
<dbReference type="EnsemblPlants" id="TraesKARUn01G0095960.1">
    <property type="protein sequence ID" value="cds.TraesKARUn01G0095960.1"/>
    <property type="gene ID" value="TraesKARUn01G0095960"/>
</dbReference>
<dbReference type="EnsemblPlants" id="TraesKARUn01G0096160.1">
    <property type="protein sequence ID" value="cds.TraesKARUn01G0096160.1"/>
    <property type="gene ID" value="TraesKARUn01G0096160"/>
</dbReference>
<dbReference type="EnsemblPlants" id="TraesKARUn01G0096230.1">
    <property type="protein sequence ID" value="cds.TraesKARUn01G0096230.1"/>
    <property type="gene ID" value="TraesKARUn01G0096230"/>
</dbReference>
<dbReference type="EnsemblPlants" id="TraesKARUn01G0096500.1">
    <property type="protein sequence ID" value="cds.TraesKARUn01G0096500.1"/>
    <property type="gene ID" value="TraesKARUn01G0096500"/>
</dbReference>
<dbReference type="EnsemblPlants" id="TraesKARUn01G0096570.1">
    <property type="protein sequence ID" value="cds.TraesKARUn01G0096570.1"/>
    <property type="gene ID" value="TraesKARUn01G0096570"/>
</dbReference>
<dbReference type="EnsemblPlants" id="TraesKARUn01G0097530.1">
    <property type="protein sequence ID" value="cds.TraesKARUn01G0097530.1"/>
    <property type="gene ID" value="TraesKARUn01G0097530"/>
</dbReference>
<dbReference type="EnsemblPlants" id="TraesKARUn01G0097710.1">
    <property type="protein sequence ID" value="cds.TraesKARUn01G0097710.1"/>
    <property type="gene ID" value="TraesKARUn01G0097710"/>
</dbReference>
<dbReference type="EnsemblPlants" id="TraesKARUn01G0101320.1">
    <property type="protein sequence ID" value="cds.TraesKARUn01G0101320.1"/>
    <property type="gene ID" value="TraesKARUn01G0101320"/>
</dbReference>
<dbReference type="EnsemblPlants" id="TraesKARUn01G0102410.1">
    <property type="protein sequence ID" value="cds.TraesKARUn01G0102410.1"/>
    <property type="gene ID" value="TraesKARUn01G0102410"/>
</dbReference>
<dbReference type="EnsemblPlants" id="TraesKARUn01G0102850.1">
    <property type="protein sequence ID" value="cds.TraesKARUn01G0102850.1"/>
    <property type="gene ID" value="TraesKARUn01G0102850"/>
</dbReference>
<dbReference type="EnsemblPlants" id="TraesKARUn01G0105940.1">
    <property type="protein sequence ID" value="cds.TraesKARUn01G0105940.1"/>
    <property type="gene ID" value="TraesKARUn01G0105940"/>
</dbReference>
<dbReference type="EnsemblPlants" id="TraesKARUn01G0106150.1">
    <property type="protein sequence ID" value="cds.TraesKARUn01G0106150.1"/>
    <property type="gene ID" value="TraesKARUn01G0106150"/>
</dbReference>
<dbReference type="EnsemblPlants" id="TraesKARUn01G0106370.1">
    <property type="protein sequence ID" value="cds.TraesKARUn01G0106370.1"/>
    <property type="gene ID" value="TraesKARUn01G0106370"/>
</dbReference>
<dbReference type="EnsemblPlants" id="TraesKARUn01G0106420.1">
    <property type="protein sequence ID" value="cds.TraesKARUn01G0106420.1"/>
    <property type="gene ID" value="TraesKARUn01G0106420"/>
</dbReference>
<dbReference type="EnsemblPlants" id="TraesKARUn01G0106740.1">
    <property type="protein sequence ID" value="cds.TraesKARUn01G0106740.1"/>
    <property type="gene ID" value="TraesKARUn01G0106740"/>
</dbReference>
<dbReference type="EnsemblPlants" id="TraesKARUn01G0106900.1">
    <property type="protein sequence ID" value="cds.TraesKARUn01G0106900.1"/>
    <property type="gene ID" value="TraesKARUn01G0106900"/>
</dbReference>
<dbReference type="EnsemblPlants" id="TraesKARUn01G0106970.1">
    <property type="protein sequence ID" value="cds.TraesKARUn01G0106970.1"/>
    <property type="gene ID" value="TraesKARUn01G0106970"/>
</dbReference>
<dbReference type="EnsemblPlants" id="TraesKARUn01G0107140.1">
    <property type="protein sequence ID" value="cds.TraesKARUn01G0107140.1"/>
    <property type="gene ID" value="TraesKARUn01G0107140"/>
</dbReference>
<dbReference type="EnsemblPlants" id="TraesKARUn01G0115160.1">
    <property type="protein sequence ID" value="cds.TraesKARUn01G0115160.1"/>
    <property type="gene ID" value="TraesKARUn01G0115160"/>
</dbReference>
<dbReference type="EnsemblPlants" id="TraesKARUn01G0115260.1">
    <property type="protein sequence ID" value="cds.TraesKARUn01G0115260.1"/>
    <property type="gene ID" value="TraesKARUn01G0115260"/>
</dbReference>
<dbReference type="EnsemblPlants" id="TraesKARUn01G0115590.1">
    <property type="protein sequence ID" value="cds.TraesKARUn01G0115590.1"/>
    <property type="gene ID" value="TraesKARUn01G0115590"/>
</dbReference>
<dbReference type="EnsemblPlants" id="TraesKARUn01G0115680.1">
    <property type="protein sequence ID" value="cds.TraesKARUn01G0115680.1"/>
    <property type="gene ID" value="TraesKARUn01G0115680"/>
</dbReference>
<dbReference type="EnsemblPlants" id="TraesKARUn01G0115720.1">
    <property type="protein sequence ID" value="cds.TraesKARUn01G0115720.1"/>
    <property type="gene ID" value="TraesKARUn01G0115720"/>
</dbReference>
<dbReference type="EnsemblPlants" id="TraesKARUn01G0115770.1">
    <property type="protein sequence ID" value="cds.TraesKARUn01G0115770.1"/>
    <property type="gene ID" value="TraesKARUn01G0115770"/>
</dbReference>
<dbReference type="EnsemblPlants" id="TraesKARUn01G0116340.1">
    <property type="protein sequence ID" value="cds.TraesKARUn01G0116340.1"/>
    <property type="gene ID" value="TraesKARUn01G0116340"/>
</dbReference>
<dbReference type="EnsemblPlants" id="TraesKARUn01G0116640.1">
    <property type="protein sequence ID" value="cds.TraesKARUn01G0116640.1"/>
    <property type="gene ID" value="TraesKARUn01G0116640"/>
</dbReference>
<dbReference type="EnsemblPlants" id="TraesKARUn01G0122590.1">
    <property type="protein sequence ID" value="cds.TraesKARUn01G0122590.1"/>
    <property type="gene ID" value="TraesKARUn01G0122590"/>
</dbReference>
<dbReference type="EnsemblPlants" id="TraesKARUn01G0123550.1">
    <property type="protein sequence ID" value="cds.TraesKARUn01G0123550.1"/>
    <property type="gene ID" value="TraesKARUn01G0123550"/>
</dbReference>
<dbReference type="EnsemblPlants" id="TraesKARUn01G0123760.1">
    <property type="protein sequence ID" value="cds.TraesKARUn01G0123760.1"/>
    <property type="gene ID" value="TraesKARUn01G0123760"/>
</dbReference>
<dbReference type="EnsemblPlants" id="TraesKARUn01G0127460.1">
    <property type="protein sequence ID" value="cds.TraesKARUn01G0127460.1"/>
    <property type="gene ID" value="TraesKARUn01G0127460"/>
</dbReference>
<dbReference type="EnsemblPlants" id="TraesKARUn01G0130250.1">
    <property type="protein sequence ID" value="cds.TraesKARUn01G0130250.1"/>
    <property type="gene ID" value="TraesKARUn01G0130250"/>
</dbReference>
<dbReference type="EnsemblPlants" id="TraesKARUn01G0131680.1">
    <property type="protein sequence ID" value="cds.TraesKARUn01G0131680.1"/>
    <property type="gene ID" value="TraesKARUn01G0131680"/>
</dbReference>
<dbReference type="EnsemblPlants" id="TraesKARUn01G0133340.1">
    <property type="protein sequence ID" value="cds.TraesKARUn01G0133340.1"/>
    <property type="gene ID" value="TraesKARUn01G0133340"/>
</dbReference>
<dbReference type="EnsemblPlants" id="TraesKARUn01G0133530.1">
    <property type="protein sequence ID" value="cds.TraesKARUn01G0133530.1"/>
    <property type="gene ID" value="TraesKARUn01G0133530"/>
</dbReference>
<dbReference type="EnsemblPlants" id="TraesKARUn01G0133770.1">
    <property type="protein sequence ID" value="cds.TraesKARUn01G0133770.1"/>
    <property type="gene ID" value="TraesKARUn01G0133770"/>
</dbReference>
<dbReference type="EnsemblPlants" id="TraesKARUn01G0133850.1">
    <property type="protein sequence ID" value="cds.TraesKARUn01G0133850.1"/>
    <property type="gene ID" value="TraesKARUn01G0133850"/>
</dbReference>
<dbReference type="EnsemblPlants" id="TraesKARUn01G0134100.1">
    <property type="protein sequence ID" value="cds.TraesKARUn01G0134100.1"/>
    <property type="gene ID" value="TraesKARUn01G0134100"/>
</dbReference>
<dbReference type="EnsemblPlants" id="TraesKARUn01G0134750.1">
    <property type="protein sequence ID" value="cds.TraesKARUn01G0134750.1"/>
    <property type="gene ID" value="TraesKARUn01G0134750"/>
</dbReference>
<dbReference type="EnsemblPlants" id="TraesKARUn01G0135020.1">
    <property type="protein sequence ID" value="cds.TraesKARUn01G0135020.1"/>
    <property type="gene ID" value="TraesKARUn01G0135020"/>
</dbReference>
<dbReference type="EnsemblPlants" id="TraesKARUn01G0135500.1">
    <property type="protein sequence ID" value="cds.TraesKARUn01G0135500.1"/>
    <property type="gene ID" value="TraesKARUn01G0135500"/>
</dbReference>
<dbReference type="EnsemblPlants" id="TraesKARUn01G0135700.1">
    <property type="protein sequence ID" value="cds.TraesKARUn01G0135700.1"/>
    <property type="gene ID" value="TraesKARUn01G0135700"/>
</dbReference>
<dbReference type="EnsemblPlants" id="TraesKARUn01G0135790.1">
    <property type="protein sequence ID" value="cds.TraesKARUn01G0135790.1"/>
    <property type="gene ID" value="TraesKARUn01G0135790"/>
</dbReference>
<dbReference type="EnsemblPlants" id="TraesKARUn01G0142420.1">
    <property type="protein sequence ID" value="cds.TraesKARUn01G0142420.1"/>
    <property type="gene ID" value="TraesKARUn01G0142420"/>
</dbReference>
<dbReference type="EnsemblPlants" id="TraesKARUn01G0149680.1">
    <property type="protein sequence ID" value="cds.TraesKARUn01G0149680.1"/>
    <property type="gene ID" value="TraesKARUn01G0149680"/>
</dbReference>
<dbReference type="EnsemblPlants" id="TraesKARUn01G0154930.1">
    <property type="protein sequence ID" value="cds.TraesKARUn01G0154930.1"/>
    <property type="gene ID" value="TraesKARUn01G0154930"/>
</dbReference>
<dbReference type="EnsemblPlants" id="TraesKARUn01G0156080.1">
    <property type="protein sequence ID" value="cds.TraesKARUn01G0156080.1"/>
    <property type="gene ID" value="TraesKARUn01G0156080"/>
</dbReference>
<dbReference type="EnsemblPlants" id="TraesKARUn01G0166710.1">
    <property type="protein sequence ID" value="cds.TraesKARUn01G0166710.1"/>
    <property type="gene ID" value="TraesKARUn01G0166710"/>
</dbReference>
<dbReference type="EnsemblPlants" id="TraesKARUn01G0171620.1">
    <property type="protein sequence ID" value="cds.TraesKARUn01G0171620.1"/>
    <property type="gene ID" value="TraesKARUn01G0171620"/>
</dbReference>
<dbReference type="EnsemblPlants" id="TraesKARUn01G0172400.1">
    <property type="protein sequence ID" value="cds.TraesKARUn01G0172400.1"/>
    <property type="gene ID" value="TraesKARUn01G0172400"/>
</dbReference>
<dbReference type="EnsemblPlants" id="TraesKARUn01G0172720.1">
    <property type="protein sequence ID" value="cds.TraesKARUn01G0172720.1"/>
    <property type="gene ID" value="TraesKARUn01G0172720"/>
</dbReference>
<dbReference type="EnsemblPlants" id="TraesKARUn01G0173030.1">
    <property type="protein sequence ID" value="cds.TraesKARUn01G0173030.1"/>
    <property type="gene ID" value="TraesKARUn01G0173030"/>
</dbReference>
<dbReference type="EnsemblPlants" id="TraesKARUn01G0175810.1">
    <property type="protein sequence ID" value="cds.TraesKARUn01G0175810.1"/>
    <property type="gene ID" value="TraesKARUn01G0175810"/>
</dbReference>
<dbReference type="EnsemblPlants" id="TraesKARUn01G0177280.1">
    <property type="protein sequence ID" value="cds.TraesKARUn01G0177280.1"/>
    <property type="gene ID" value="TraesKARUn01G0177280"/>
</dbReference>
<dbReference type="EnsemblPlants" id="TraesKARUn01G0177340.1">
    <property type="protein sequence ID" value="cds.TraesKARUn01G0177340.1"/>
    <property type="gene ID" value="TraesKARUn01G0177340"/>
</dbReference>
<dbReference type="EnsemblPlants" id="TraesKARUn01G0177520.1">
    <property type="protein sequence ID" value="cds.TraesKARUn01G0177520.1"/>
    <property type="gene ID" value="TraesKARUn01G0177520"/>
</dbReference>
<dbReference type="EnsemblPlants" id="TraesKARUn01G0177970.1">
    <property type="protein sequence ID" value="cds.TraesKARUn01G0177970.1"/>
    <property type="gene ID" value="TraesKARUn01G0177970"/>
</dbReference>
<dbReference type="EnsemblPlants" id="TraesKARUn01G0179460.1">
    <property type="protein sequence ID" value="cds.TraesKARUn01G0179460.1"/>
    <property type="gene ID" value="TraesKARUn01G0179460"/>
</dbReference>
<dbReference type="EnsemblPlants" id="TraesKARUn01G0182750.1">
    <property type="protein sequence ID" value="cds.TraesKARUn01G0182750.1"/>
    <property type="gene ID" value="TraesKARUn01G0182750"/>
</dbReference>
<dbReference type="EnsemblPlants" id="TraesKARUn01G0183570.1">
    <property type="protein sequence ID" value="cds.TraesKARUn01G0183570.1"/>
    <property type="gene ID" value="TraesKARUn01G0183570"/>
</dbReference>
<dbReference type="EnsemblPlants" id="TraesKARUn01G0183800.1">
    <property type="protein sequence ID" value="cds.TraesKARUn01G0183800.1"/>
    <property type="gene ID" value="TraesKARUn01G0183800"/>
</dbReference>
<dbReference type="EnsemblPlants" id="TraesKARUn01G0184000.1">
    <property type="protein sequence ID" value="cds.TraesKARUn01G0184000.1"/>
    <property type="gene ID" value="TraesKARUn01G0184000"/>
</dbReference>
<dbReference type="EnsemblPlants" id="TraesKARUn01G0184080.1">
    <property type="protein sequence ID" value="cds.TraesKARUn01G0184080.1"/>
    <property type="gene ID" value="TraesKARUn01G0184080"/>
</dbReference>
<dbReference type="EnsemblPlants" id="TraesKARUn01G0184480.1">
    <property type="protein sequence ID" value="cds.TraesKARUn01G0184480.1"/>
    <property type="gene ID" value="TraesKARUn01G0184480"/>
</dbReference>
<dbReference type="EnsemblPlants" id="TraesKARUn01G0184690.1">
    <property type="protein sequence ID" value="cds.TraesKARUn01G0184690.1"/>
    <property type="gene ID" value="TraesKARUn01G0184690"/>
</dbReference>
<dbReference type="EnsemblPlants" id="TraesKARUn01G0186540.1">
    <property type="protein sequence ID" value="cds.TraesKARUn01G0186540.1"/>
    <property type="gene ID" value="TraesKARUn01G0186540"/>
</dbReference>
<dbReference type="EnsemblPlants" id="TraesKARUn01G0187260.1">
    <property type="protein sequence ID" value="cds.TraesKARUn01G0187260.1"/>
    <property type="gene ID" value="TraesKARUn01G0187260"/>
</dbReference>
<dbReference type="EnsemblPlants" id="TraesKARUn01G0187480.1">
    <property type="protein sequence ID" value="cds.TraesKARUn01G0187480.1"/>
    <property type="gene ID" value="TraesKARUn01G0187480"/>
</dbReference>
<dbReference type="EnsemblPlants" id="TraesKARUn01G0187690.1">
    <property type="protein sequence ID" value="cds.TraesKARUn01G0187690.1"/>
    <property type="gene ID" value="TraesKARUn01G0187690"/>
</dbReference>
<dbReference type="EnsemblPlants" id="TraesKARUn01G0188140.1">
    <property type="protein sequence ID" value="cds.TraesKARUn01G0188140.1"/>
    <property type="gene ID" value="TraesKARUn01G0188140"/>
</dbReference>
<dbReference type="EnsemblPlants" id="TraesKARUn01G0190940.1">
    <property type="protein sequence ID" value="cds.TraesKARUn01G0190940.1"/>
    <property type="gene ID" value="TraesKARUn01G0190940"/>
</dbReference>
<dbReference type="EnsemblPlants" id="TraesKARUn01G0191640.1">
    <property type="protein sequence ID" value="cds.TraesKARUn01G0191640.1"/>
    <property type="gene ID" value="TraesKARUn01G0191640"/>
</dbReference>
<dbReference type="EnsemblPlants" id="TraesPARA_EIv1.0_1062700.1">
    <property type="protein sequence ID" value="TraesPARA_EIv1.0_1062700.1.CDS1"/>
    <property type="gene ID" value="TraesPARA_EIv1.0_1062700"/>
</dbReference>
<dbReference type="EnsemblPlants" id="TraesPARA_EIv1.0_2645030.1">
    <property type="protein sequence ID" value="TraesPARA_EIv1.0_2645030.1.CDS1"/>
    <property type="gene ID" value="TraesPARA_EIv1.0_2645030"/>
</dbReference>
<dbReference type="EnsemblPlants" id="TraesPARA_EIv1.0_2646680.1">
    <property type="protein sequence ID" value="TraesPARA_EIv1.0_2646680.1.CDS1"/>
    <property type="gene ID" value="TraesPARA_EIv1.0_2646680"/>
</dbReference>
<dbReference type="EnsemblPlants" id="TraesPARA_EIv1.0_2647220.1">
    <property type="protein sequence ID" value="TraesPARA_EIv1.0_2647220.1.CDS1"/>
    <property type="gene ID" value="TraesPARA_EIv1.0_2647220"/>
</dbReference>
<dbReference type="EnsemblPlants" id="TraesPARA_EIv1.0_2647480.1">
    <property type="protein sequence ID" value="TraesPARA_EIv1.0_2647480.1.CDS1"/>
    <property type="gene ID" value="TraesPARA_EIv1.0_2647480"/>
</dbReference>
<dbReference type="EnsemblPlants" id="TraesPARA_EIv1.0_2647910.1">
    <property type="protein sequence ID" value="TraesPARA_EIv1.0_2647910.1.CDS1"/>
    <property type="gene ID" value="TraesPARA_EIv1.0_2647910"/>
</dbReference>
<dbReference type="EnsemblPlants" id="TraesPARA_EIv1.0_2648030.1">
    <property type="protein sequence ID" value="TraesPARA_EIv1.0_2648030.1.CDS1"/>
    <property type="gene ID" value="TraesPARA_EIv1.0_2648030"/>
</dbReference>
<dbReference type="EnsemblPlants" id="TraesPARA_EIv1.0_2648550.1">
    <property type="protein sequence ID" value="TraesPARA_EIv1.0_2648550.1.CDS1"/>
    <property type="gene ID" value="TraesPARA_EIv1.0_2648550"/>
</dbReference>
<dbReference type="EnsemblPlants" id="TraesPARA_EIv1.0_2648700.1">
    <property type="protein sequence ID" value="TraesPARA_EIv1.0_2648700.1.CDS1"/>
    <property type="gene ID" value="TraesPARA_EIv1.0_2648700"/>
</dbReference>
<dbReference type="EnsemblPlants" id="TraesPARA_EIv1.0_2648950.1">
    <property type="protein sequence ID" value="TraesPARA_EIv1.0_2648950.1.CDS1"/>
    <property type="gene ID" value="TraesPARA_EIv1.0_2648950"/>
</dbReference>
<dbReference type="EnsemblPlants" id="TraesPARA_EIv1.0_2649120.1">
    <property type="protein sequence ID" value="TraesPARA_EIv1.0_2649120.1.CDS1"/>
    <property type="gene ID" value="TraesPARA_EIv1.0_2649120"/>
</dbReference>
<dbReference type="EnsemblPlants" id="TraesPARA_EIv1.0_2649220.1">
    <property type="protein sequence ID" value="TraesPARA_EIv1.0_2649220.1.CDS1"/>
    <property type="gene ID" value="TraesPARA_EIv1.0_2649220"/>
</dbReference>
<dbReference type="EnsemblPlants" id="TraesPARA_EIv1.0_2650240.1">
    <property type="protein sequence ID" value="TraesPARA_EIv1.0_2650240.1.CDS1"/>
    <property type="gene ID" value="TraesPARA_EIv1.0_2650240"/>
</dbReference>
<dbReference type="EnsemblPlants" id="TraesPARA_EIv1.0_2650410.1">
    <property type="protein sequence ID" value="TraesPARA_EIv1.0_2650410.1.CDS1"/>
    <property type="gene ID" value="TraesPARA_EIv1.0_2650410"/>
</dbReference>
<dbReference type="EnsemblPlants" id="TraesPARA_EIv1.0_2651080.1">
    <property type="protein sequence ID" value="TraesPARA_EIv1.0_2651080.1.CDS1"/>
    <property type="gene ID" value="TraesPARA_EIv1.0_2651080"/>
</dbReference>
<dbReference type="EnsemblPlants" id="TraesPARA_EIv1.0_2651460.1">
    <property type="protein sequence ID" value="TraesPARA_EIv1.0_2651460.1.CDS1"/>
    <property type="gene ID" value="TraesPARA_EIv1.0_2651460"/>
</dbReference>
<dbReference type="EnsemblPlants" id="TraesPARA_EIv1.0_2652720.1">
    <property type="protein sequence ID" value="TraesPARA_EIv1.0_2652720.1.CDS1"/>
    <property type="gene ID" value="TraesPARA_EIv1.0_2652720"/>
</dbReference>
<dbReference type="EnsemblPlants" id="TraesPARA_EIv1.0_2653160.1">
    <property type="protein sequence ID" value="TraesPARA_EIv1.0_2653160.1.CDS1"/>
    <property type="gene ID" value="TraesPARA_EIv1.0_2653160"/>
</dbReference>
<dbReference type="EnsemblPlants" id="TraesPARA_EIv1.0_2653990.1">
    <property type="protein sequence ID" value="TraesPARA_EIv1.0_2653990.1.CDS1"/>
    <property type="gene ID" value="TraesPARA_EIv1.0_2653990"/>
</dbReference>
<dbReference type="EnsemblPlants" id="TraesPARA_EIv1.0_2654860.1">
    <property type="protein sequence ID" value="TraesPARA_EIv1.0_2654860.1.CDS1"/>
    <property type="gene ID" value="TraesPARA_EIv1.0_2654860"/>
</dbReference>
<dbReference type="EnsemblPlants" id="TraesPARA_EIv1.0_2655100.1">
    <property type="protein sequence ID" value="TraesPARA_EIv1.0_2655100.1.CDS1"/>
    <property type="gene ID" value="TraesPARA_EIv1.0_2655100"/>
</dbReference>
<dbReference type="EnsemblPlants" id="TraesPARA_EIv1.0_2655490.1">
    <property type="protein sequence ID" value="TraesPARA_EIv1.0_2655490.1.CDS1"/>
    <property type="gene ID" value="TraesPARA_EIv1.0_2655490"/>
</dbReference>
<dbReference type="EnsemblPlants" id="TraesPARA_EIv1.0_2655710.1">
    <property type="protein sequence ID" value="TraesPARA_EIv1.0_2655710.1.CDS1"/>
    <property type="gene ID" value="TraesPARA_EIv1.0_2655710"/>
</dbReference>
<dbReference type="EnsemblPlants" id="TraesPARA_EIv1.0_2656110.1">
    <property type="protein sequence ID" value="TraesPARA_EIv1.0_2656110.1.CDS1"/>
    <property type="gene ID" value="TraesPARA_EIv1.0_2656110"/>
</dbReference>
<dbReference type="EnsemblPlants" id="TraesPARA_EIv1.0_2656400.1">
    <property type="protein sequence ID" value="TraesPARA_EIv1.0_2656400.1.CDS1"/>
    <property type="gene ID" value="TraesPARA_EIv1.0_2656400"/>
</dbReference>
<dbReference type="EnsemblPlants" id="TraesPARA_EIv1.0_2656820.1">
    <property type="protein sequence ID" value="TraesPARA_EIv1.0_2656820.1.CDS1"/>
    <property type="gene ID" value="TraesPARA_EIv1.0_2656820"/>
</dbReference>
<dbReference type="EnsemblPlants" id="TraesPARA_EIv1.0_2656880.1">
    <property type="protein sequence ID" value="TraesPARA_EIv1.0_2656880.1.CDS1"/>
    <property type="gene ID" value="TraesPARA_EIv1.0_2656880"/>
</dbReference>
<dbReference type="EnsemblPlants" id="TraesPARA_EIv1.0_2657130.1">
    <property type="protein sequence ID" value="TraesPARA_EIv1.0_2657130.1.CDS1"/>
    <property type="gene ID" value="TraesPARA_EIv1.0_2657130"/>
</dbReference>
<dbReference type="EnsemblPlants" id="TraesPARA_EIv1.0_2658340.1">
    <property type="protein sequence ID" value="TraesPARA_EIv1.0_2658340.1.CDS1"/>
    <property type="gene ID" value="TraesPARA_EIv1.0_2658340"/>
</dbReference>
<dbReference type="EnsemblPlants" id="TraesPARA_EIv1.0_2659990.1">
    <property type="protein sequence ID" value="TraesPARA_EIv1.0_2659990.1.CDS1"/>
    <property type="gene ID" value="TraesPARA_EIv1.0_2659990"/>
</dbReference>
<dbReference type="EnsemblPlants" id="TraesPARA_EIv1.0_2660210.1">
    <property type="protein sequence ID" value="TraesPARA_EIv1.0_2660210.1.CDS1"/>
    <property type="gene ID" value="TraesPARA_EIv1.0_2660210"/>
</dbReference>
<dbReference type="EnsemblPlants" id="TraesPARA_EIv1.0_2662910.1">
    <property type="protein sequence ID" value="TraesPARA_EIv1.0_2662910.1.CDS1"/>
    <property type="gene ID" value="TraesPARA_EIv1.0_2662910"/>
</dbReference>
<dbReference type="EnsemblPlants" id="TraesPARA_EIv1.0_2663160.1">
    <property type="protein sequence ID" value="TraesPARA_EIv1.0_2663160.1.CDS1"/>
    <property type="gene ID" value="TraesPARA_EIv1.0_2663160"/>
</dbReference>
<dbReference type="EnsemblPlants" id="TraesPARA_EIv1.0_2665760.1">
    <property type="protein sequence ID" value="TraesPARA_EIv1.0_2665760.1.CDS1"/>
    <property type="gene ID" value="TraesPARA_EIv1.0_2665760"/>
</dbReference>
<dbReference type="EnsemblPlants" id="TraesPARA_EIv1.0_2666370.1">
    <property type="protein sequence ID" value="TraesPARA_EIv1.0_2666370.1.CDS1"/>
    <property type="gene ID" value="TraesPARA_EIv1.0_2666370"/>
</dbReference>
<dbReference type="EnsemblPlants" id="TraesPARA_EIv1.0_2666480.1">
    <property type="protein sequence ID" value="TraesPARA_EIv1.0_2666480.1.CDS1"/>
    <property type="gene ID" value="TraesPARA_EIv1.0_2666480"/>
</dbReference>
<dbReference type="EnsemblPlants" id="TraesPARA_EIv1.0_2666640.1">
    <property type="protein sequence ID" value="TraesPARA_EIv1.0_2666640.1.CDS1"/>
    <property type="gene ID" value="TraesPARA_EIv1.0_2666640"/>
</dbReference>
<dbReference type="EnsemblPlants" id="TraesPARA_EIv1.0_2666960.1">
    <property type="protein sequence ID" value="TraesPARA_EIv1.0_2666960.1.CDS1"/>
    <property type="gene ID" value="TraesPARA_EIv1.0_2666960"/>
</dbReference>
<dbReference type="EnsemblPlants" id="TraesPARA_EIv1.0_2667730.1">
    <property type="protein sequence ID" value="TraesPARA_EIv1.0_2667730.1.CDS1"/>
    <property type="gene ID" value="TraesPARA_EIv1.0_2667730"/>
</dbReference>
<dbReference type="EnsemblPlants" id="TraesPARA_EIv1.0_2669260.1">
    <property type="protein sequence ID" value="TraesPARA_EIv1.0_2669260.1.CDS1"/>
    <property type="gene ID" value="TraesPARA_EIv1.0_2669260"/>
</dbReference>
<dbReference type="EnsemblPlants" id="TraesPARA_EIv1.0_2670300.1">
    <property type="protein sequence ID" value="TraesPARA_EIv1.0_2670300.1.CDS1"/>
    <property type="gene ID" value="TraesPARA_EIv1.0_2670300"/>
</dbReference>
<dbReference type="EnsemblPlants" id="TraesPARA_EIv1.0_2672490.1">
    <property type="protein sequence ID" value="TraesPARA_EIv1.0_2672490.1.CDS1"/>
    <property type="gene ID" value="TraesPARA_EIv1.0_2672490"/>
</dbReference>
<dbReference type="EnsemblPlants" id="TraesPARA_EIv1.0_2673220.1">
    <property type="protein sequence ID" value="TraesPARA_EIv1.0_2673220.1.CDS1"/>
    <property type="gene ID" value="TraesPARA_EIv1.0_2673220"/>
</dbReference>
<dbReference type="EnsemblPlants" id="TraesPARA_EIv1.0_2673750.1">
    <property type="protein sequence ID" value="TraesPARA_EIv1.0_2673750.1.CDS1"/>
    <property type="gene ID" value="TraesPARA_EIv1.0_2673750"/>
</dbReference>
<dbReference type="EnsemblPlants" id="TraesPARA_EIv1.0_2674290.1">
    <property type="protein sequence ID" value="TraesPARA_EIv1.0_2674290.1.CDS1"/>
    <property type="gene ID" value="TraesPARA_EIv1.0_2674290"/>
</dbReference>
<dbReference type="EnsemblPlants" id="TraesPARA_EIv1.0_2675160.1">
    <property type="protein sequence ID" value="TraesPARA_EIv1.0_2675160.1.CDS1"/>
    <property type="gene ID" value="TraesPARA_EIv1.0_2675160"/>
</dbReference>
<dbReference type="EnsemblPlants" id="TraesPARA_EIv1.0_2675890.1">
    <property type="protein sequence ID" value="TraesPARA_EIv1.0_2675890.1.CDS1"/>
    <property type="gene ID" value="TraesPARA_EIv1.0_2675890"/>
</dbReference>
<dbReference type="EnsemblPlants" id="TraesPARA_EIv1.0_2680850.1">
    <property type="protein sequence ID" value="TraesPARA_EIv1.0_2680850.1.CDS1"/>
    <property type="gene ID" value="TraesPARA_EIv1.0_2680850"/>
</dbReference>
<dbReference type="EnsemblPlants" id="TraesPARA_EIv1.0_2681470.1">
    <property type="protein sequence ID" value="TraesPARA_EIv1.0_2681470.1.CDS1"/>
    <property type="gene ID" value="TraesPARA_EIv1.0_2681470"/>
</dbReference>
<dbReference type="EnsemblPlants" id="TraesRN7A0100046500.1">
    <property type="protein sequence ID" value="TraesRN7A0100046500.1"/>
    <property type="gene ID" value="TraesRN7A0100046500"/>
</dbReference>
<dbReference type="GeneID" id="803115"/>
<dbReference type="Gramene" id="TraesARI3D03G01843390.1">
    <property type="protein sequence ID" value="TraesARI3D03G01843390.1.CDS1"/>
    <property type="gene ID" value="TraesARI3D03G01843390"/>
</dbReference>
<dbReference type="Gramene" id="TraesCS3D02G057700.1">
    <property type="protein sequence ID" value="TraesCS3D02G057700.1.cds1"/>
    <property type="gene ID" value="TraesCS3D02G057700"/>
</dbReference>
<dbReference type="Gramene" id="TraesCS3D03G0108400.1">
    <property type="protein sequence ID" value="TraesCS3D03G0108400.1.CDS1"/>
    <property type="gene ID" value="TraesCS3D03G0108400"/>
</dbReference>
<dbReference type="Gramene" id="TraesJAG3D03G01816260.1">
    <property type="protein sequence ID" value="TraesJAG3D03G01816260.1.CDS1"/>
    <property type="gene ID" value="TraesJAG3D03G01816260"/>
</dbReference>
<dbReference type="Gramene" id="TraesKAR3D01G0037470.1">
    <property type="protein sequence ID" value="cds.TraesKAR3D01G0037470.1"/>
    <property type="gene ID" value="TraesKAR3D01G0037470"/>
</dbReference>
<dbReference type="Gramene" id="TraesKAR7A01G0472660.1">
    <property type="protein sequence ID" value="cds.TraesKAR7A01G0472660.1"/>
    <property type="gene ID" value="TraesKAR7A01G0472660"/>
</dbReference>
<dbReference type="Gramene" id="TraesKARUn01G0026530.1">
    <property type="protein sequence ID" value="cds.TraesKARUn01G0026530.1"/>
    <property type="gene ID" value="TraesKARUn01G0026530"/>
</dbReference>
<dbReference type="Gramene" id="TraesKARUn01G0028080.1">
    <property type="protein sequence ID" value="cds.TraesKARUn01G0028080.1"/>
    <property type="gene ID" value="TraesKARUn01G0028080"/>
</dbReference>
<dbReference type="Gramene" id="TraesKARUn01G0028440.1">
    <property type="protein sequence ID" value="cds.TraesKARUn01G0028440.1"/>
    <property type="gene ID" value="TraesKARUn01G0028440"/>
</dbReference>
<dbReference type="Gramene" id="TraesKARUn01G0029910.1">
    <property type="protein sequence ID" value="cds.TraesKARUn01G0029910.1"/>
    <property type="gene ID" value="TraesKARUn01G0029910"/>
</dbReference>
<dbReference type="Gramene" id="TraesKARUn01G0030390.1">
    <property type="protein sequence ID" value="cds.TraesKARUn01G0030390.1"/>
    <property type="gene ID" value="TraesKARUn01G0030390"/>
</dbReference>
<dbReference type="Gramene" id="TraesKARUn01G0030520.1">
    <property type="protein sequence ID" value="cds.TraesKARUn01G0030520.1"/>
    <property type="gene ID" value="TraesKARUn01G0030520"/>
</dbReference>
<dbReference type="Gramene" id="TraesKARUn01G0033520.1">
    <property type="protein sequence ID" value="cds.TraesKARUn01G0033520.1"/>
    <property type="gene ID" value="TraesKARUn01G0033520"/>
</dbReference>
<dbReference type="Gramene" id="TraesKARUn01G0033850.1">
    <property type="protein sequence ID" value="cds.TraesKARUn01G0033850.1"/>
    <property type="gene ID" value="TraesKARUn01G0033850"/>
</dbReference>
<dbReference type="Gramene" id="TraesKARUn01G0034440.1">
    <property type="protein sequence ID" value="cds.TraesKARUn01G0034440.1"/>
    <property type="gene ID" value="TraesKARUn01G0034440"/>
</dbReference>
<dbReference type="Gramene" id="TraesKARUn01G0035350.1">
    <property type="protein sequence ID" value="cds.TraesKARUn01G0035350.1"/>
    <property type="gene ID" value="TraesKARUn01G0035350"/>
</dbReference>
<dbReference type="Gramene" id="TraesKARUn01G0036110.1">
    <property type="protein sequence ID" value="cds.TraesKARUn01G0036110.1"/>
    <property type="gene ID" value="TraesKARUn01G0036110"/>
</dbReference>
<dbReference type="Gramene" id="TraesKARUn01G0036430.1">
    <property type="protein sequence ID" value="cds.TraesKARUn01G0036430.1"/>
    <property type="gene ID" value="TraesKARUn01G0036430"/>
</dbReference>
<dbReference type="Gramene" id="TraesKARUn01G0036720.1">
    <property type="protein sequence ID" value="cds.TraesKARUn01G0036720.1"/>
    <property type="gene ID" value="TraesKARUn01G0036720"/>
</dbReference>
<dbReference type="Gramene" id="TraesKARUn01G0061910.1">
    <property type="protein sequence ID" value="cds.TraesKARUn01G0061910.1"/>
    <property type="gene ID" value="TraesKARUn01G0061910"/>
</dbReference>
<dbReference type="Gramene" id="TraesKARUn01G0066250.1">
    <property type="protein sequence ID" value="cds.TraesKARUn01G0066250.1"/>
    <property type="gene ID" value="TraesKARUn01G0066250"/>
</dbReference>
<dbReference type="Gramene" id="TraesKARUn01G0068330.1">
    <property type="protein sequence ID" value="cds.TraesKARUn01G0068330.1"/>
    <property type="gene ID" value="TraesKARUn01G0068330"/>
</dbReference>
<dbReference type="Gramene" id="TraesKARUn01G0068540.1">
    <property type="protein sequence ID" value="cds.TraesKARUn01G0068540.1"/>
    <property type="gene ID" value="TraesKARUn01G0068540"/>
</dbReference>
<dbReference type="Gramene" id="TraesKARUn01G0068720.1">
    <property type="protein sequence ID" value="cds.TraesKARUn01G0068720.1"/>
    <property type="gene ID" value="TraesKARUn01G0068720"/>
</dbReference>
<dbReference type="Gramene" id="TraesKARUn01G0068770.1">
    <property type="protein sequence ID" value="cds.TraesKARUn01G0068770.1"/>
    <property type="gene ID" value="TraesKARUn01G0068770"/>
</dbReference>
<dbReference type="Gramene" id="TraesKARUn01G0068930.1">
    <property type="protein sequence ID" value="cds.TraesKARUn01G0068930.1"/>
    <property type="gene ID" value="TraesKARUn01G0068930"/>
</dbReference>
<dbReference type="Gramene" id="TraesKARUn01G0069210.1">
    <property type="protein sequence ID" value="cds.TraesKARUn01G0069210.1"/>
    <property type="gene ID" value="TraesKARUn01G0069210"/>
</dbReference>
<dbReference type="Gramene" id="TraesKARUn01G0069380.1">
    <property type="protein sequence ID" value="cds.TraesKARUn01G0069380.1"/>
    <property type="gene ID" value="TraesKARUn01G0069380"/>
</dbReference>
<dbReference type="Gramene" id="TraesKARUn01G0071340.1">
    <property type="protein sequence ID" value="cds.TraesKARUn01G0071340.1"/>
    <property type="gene ID" value="TraesKARUn01G0071340"/>
</dbReference>
<dbReference type="Gramene" id="TraesKARUn01G0073080.1">
    <property type="protein sequence ID" value="cds.TraesKARUn01G0073080.1"/>
    <property type="gene ID" value="TraesKARUn01G0073080"/>
</dbReference>
<dbReference type="Gramene" id="TraesKARUn01G0074120.1">
    <property type="protein sequence ID" value="cds.TraesKARUn01G0074120.1"/>
    <property type="gene ID" value="TraesKARUn01G0074120"/>
</dbReference>
<dbReference type="Gramene" id="TraesKARUn01G0075800.1">
    <property type="protein sequence ID" value="cds.TraesKARUn01G0075800.1"/>
    <property type="gene ID" value="TraesKARUn01G0075800"/>
</dbReference>
<dbReference type="Gramene" id="TraesKARUn01G0075860.1">
    <property type="protein sequence ID" value="cds.TraesKARUn01G0075860.1"/>
    <property type="gene ID" value="TraesKARUn01G0075860"/>
</dbReference>
<dbReference type="Gramene" id="TraesKARUn01G0076090.1">
    <property type="protein sequence ID" value="cds.TraesKARUn01G0076090.1"/>
    <property type="gene ID" value="TraesKARUn01G0076090"/>
</dbReference>
<dbReference type="Gramene" id="TraesKARUn01G0081140.1">
    <property type="protein sequence ID" value="cds.TraesKARUn01G0081140.1"/>
    <property type="gene ID" value="TraesKARUn01G0081140"/>
</dbReference>
<dbReference type="Gramene" id="TraesKARUn01G0085690.1">
    <property type="protein sequence ID" value="cds.TraesKARUn01G0085690.1"/>
    <property type="gene ID" value="TraesKARUn01G0085690"/>
</dbReference>
<dbReference type="Gramene" id="TraesKARUn01G0086780.1">
    <property type="protein sequence ID" value="cds.TraesKARUn01G0086780.1"/>
    <property type="gene ID" value="TraesKARUn01G0086780"/>
</dbReference>
<dbReference type="Gramene" id="TraesKARUn01G0088230.1">
    <property type="protein sequence ID" value="cds.TraesKARUn01G0088230.1"/>
    <property type="gene ID" value="TraesKARUn01G0088230"/>
</dbReference>
<dbReference type="Gramene" id="TraesKARUn01G0088900.1">
    <property type="protein sequence ID" value="cds.TraesKARUn01G0088900.1"/>
    <property type="gene ID" value="TraesKARUn01G0088900"/>
</dbReference>
<dbReference type="Gramene" id="TraesKARUn01G0089180.1">
    <property type="protein sequence ID" value="cds.TraesKARUn01G0089180.1"/>
    <property type="gene ID" value="TraesKARUn01G0089180"/>
</dbReference>
<dbReference type="Gramene" id="TraesKARUn01G0089250.1">
    <property type="protein sequence ID" value="cds.TraesKARUn01G0089250.1"/>
    <property type="gene ID" value="TraesKARUn01G0089250"/>
</dbReference>
<dbReference type="Gramene" id="TraesKARUn01G0089610.1">
    <property type="protein sequence ID" value="cds.TraesKARUn01G0089610.1"/>
    <property type="gene ID" value="TraesKARUn01G0089610"/>
</dbReference>
<dbReference type="Gramene" id="TraesKARUn01G0092160.1">
    <property type="protein sequence ID" value="cds.TraesKARUn01G0092160.1"/>
    <property type="gene ID" value="TraesKARUn01G0092160"/>
</dbReference>
<dbReference type="Gramene" id="TraesKARUn01G0095820.1">
    <property type="protein sequence ID" value="cds.TraesKARUn01G0095820.1"/>
    <property type="gene ID" value="TraesKARUn01G0095820"/>
</dbReference>
<dbReference type="Gramene" id="TraesKARUn01G0095960.1">
    <property type="protein sequence ID" value="cds.TraesKARUn01G0095960.1"/>
    <property type="gene ID" value="TraesKARUn01G0095960"/>
</dbReference>
<dbReference type="Gramene" id="TraesKARUn01G0096160.1">
    <property type="protein sequence ID" value="cds.TraesKARUn01G0096160.1"/>
    <property type="gene ID" value="TraesKARUn01G0096160"/>
</dbReference>
<dbReference type="Gramene" id="TraesKARUn01G0096230.1">
    <property type="protein sequence ID" value="cds.TraesKARUn01G0096230.1"/>
    <property type="gene ID" value="TraesKARUn01G0096230"/>
</dbReference>
<dbReference type="Gramene" id="TraesKARUn01G0096500.1">
    <property type="protein sequence ID" value="cds.TraesKARUn01G0096500.1"/>
    <property type="gene ID" value="TraesKARUn01G0096500"/>
</dbReference>
<dbReference type="Gramene" id="TraesKARUn01G0096570.1">
    <property type="protein sequence ID" value="cds.TraesKARUn01G0096570.1"/>
    <property type="gene ID" value="TraesKARUn01G0096570"/>
</dbReference>
<dbReference type="Gramene" id="TraesKARUn01G0097530.1">
    <property type="protein sequence ID" value="cds.TraesKARUn01G0097530.1"/>
    <property type="gene ID" value="TraesKARUn01G0097530"/>
</dbReference>
<dbReference type="Gramene" id="TraesKARUn01G0097710.1">
    <property type="protein sequence ID" value="cds.TraesKARUn01G0097710.1"/>
    <property type="gene ID" value="TraesKARUn01G0097710"/>
</dbReference>
<dbReference type="Gramene" id="TraesKARUn01G0101320.1">
    <property type="protein sequence ID" value="cds.TraesKARUn01G0101320.1"/>
    <property type="gene ID" value="TraesKARUn01G0101320"/>
</dbReference>
<dbReference type="Gramene" id="TraesKARUn01G0102410.1">
    <property type="protein sequence ID" value="cds.TraesKARUn01G0102410.1"/>
    <property type="gene ID" value="TraesKARUn01G0102410"/>
</dbReference>
<dbReference type="Gramene" id="TraesKARUn01G0102850.1">
    <property type="protein sequence ID" value="cds.TraesKARUn01G0102850.1"/>
    <property type="gene ID" value="TraesKARUn01G0102850"/>
</dbReference>
<dbReference type="Gramene" id="TraesKARUn01G0105940.1">
    <property type="protein sequence ID" value="cds.TraesKARUn01G0105940.1"/>
    <property type="gene ID" value="TraesKARUn01G0105940"/>
</dbReference>
<dbReference type="Gramene" id="TraesKARUn01G0106150.1">
    <property type="protein sequence ID" value="cds.TraesKARUn01G0106150.1"/>
    <property type="gene ID" value="TraesKARUn01G0106150"/>
</dbReference>
<dbReference type="Gramene" id="TraesKARUn01G0106370.1">
    <property type="protein sequence ID" value="cds.TraesKARUn01G0106370.1"/>
    <property type="gene ID" value="TraesKARUn01G0106370"/>
</dbReference>
<dbReference type="Gramene" id="TraesKARUn01G0106420.1">
    <property type="protein sequence ID" value="cds.TraesKARUn01G0106420.1"/>
    <property type="gene ID" value="TraesKARUn01G0106420"/>
</dbReference>
<dbReference type="Gramene" id="TraesKARUn01G0106740.1">
    <property type="protein sequence ID" value="cds.TraesKARUn01G0106740.1"/>
    <property type="gene ID" value="TraesKARUn01G0106740"/>
</dbReference>
<dbReference type="Gramene" id="TraesKARUn01G0106900.1">
    <property type="protein sequence ID" value="cds.TraesKARUn01G0106900.1"/>
    <property type="gene ID" value="TraesKARUn01G0106900"/>
</dbReference>
<dbReference type="Gramene" id="TraesKARUn01G0106970.1">
    <property type="protein sequence ID" value="cds.TraesKARUn01G0106970.1"/>
    <property type="gene ID" value="TraesKARUn01G0106970"/>
</dbReference>
<dbReference type="Gramene" id="TraesKARUn01G0107140.1">
    <property type="protein sequence ID" value="cds.TraesKARUn01G0107140.1"/>
    <property type="gene ID" value="TraesKARUn01G0107140"/>
</dbReference>
<dbReference type="Gramene" id="TraesKARUn01G0115160.1">
    <property type="protein sequence ID" value="cds.TraesKARUn01G0115160.1"/>
    <property type="gene ID" value="TraesKARUn01G0115160"/>
</dbReference>
<dbReference type="Gramene" id="TraesKARUn01G0115260.1">
    <property type="protein sequence ID" value="cds.TraesKARUn01G0115260.1"/>
    <property type="gene ID" value="TraesKARUn01G0115260"/>
</dbReference>
<dbReference type="Gramene" id="TraesKARUn01G0115590.1">
    <property type="protein sequence ID" value="cds.TraesKARUn01G0115590.1"/>
    <property type="gene ID" value="TraesKARUn01G0115590"/>
</dbReference>
<dbReference type="Gramene" id="TraesKARUn01G0115680.1">
    <property type="protein sequence ID" value="cds.TraesKARUn01G0115680.1"/>
    <property type="gene ID" value="TraesKARUn01G0115680"/>
</dbReference>
<dbReference type="Gramene" id="TraesKARUn01G0115720.1">
    <property type="protein sequence ID" value="cds.TraesKARUn01G0115720.1"/>
    <property type="gene ID" value="TraesKARUn01G0115720"/>
</dbReference>
<dbReference type="Gramene" id="TraesKARUn01G0115770.1">
    <property type="protein sequence ID" value="cds.TraesKARUn01G0115770.1"/>
    <property type="gene ID" value="TraesKARUn01G0115770"/>
</dbReference>
<dbReference type="Gramene" id="TraesKARUn01G0116340.1">
    <property type="protein sequence ID" value="cds.TraesKARUn01G0116340.1"/>
    <property type="gene ID" value="TraesKARUn01G0116340"/>
</dbReference>
<dbReference type="Gramene" id="TraesKARUn01G0116640.1">
    <property type="protein sequence ID" value="cds.TraesKARUn01G0116640.1"/>
    <property type="gene ID" value="TraesKARUn01G0116640"/>
</dbReference>
<dbReference type="Gramene" id="TraesKARUn01G0122590.1">
    <property type="protein sequence ID" value="cds.TraesKARUn01G0122590.1"/>
    <property type="gene ID" value="TraesKARUn01G0122590"/>
</dbReference>
<dbReference type="Gramene" id="TraesKARUn01G0123550.1">
    <property type="protein sequence ID" value="cds.TraesKARUn01G0123550.1"/>
    <property type="gene ID" value="TraesKARUn01G0123550"/>
</dbReference>
<dbReference type="Gramene" id="TraesKARUn01G0123760.1">
    <property type="protein sequence ID" value="cds.TraesKARUn01G0123760.1"/>
    <property type="gene ID" value="TraesKARUn01G0123760"/>
</dbReference>
<dbReference type="Gramene" id="TraesKARUn01G0127460.1">
    <property type="protein sequence ID" value="cds.TraesKARUn01G0127460.1"/>
    <property type="gene ID" value="TraesKARUn01G0127460"/>
</dbReference>
<dbReference type="Gramene" id="TraesKARUn01G0130250.1">
    <property type="protein sequence ID" value="cds.TraesKARUn01G0130250.1"/>
    <property type="gene ID" value="TraesKARUn01G0130250"/>
</dbReference>
<dbReference type="Gramene" id="TraesKARUn01G0131680.1">
    <property type="protein sequence ID" value="cds.TraesKARUn01G0131680.1"/>
    <property type="gene ID" value="TraesKARUn01G0131680"/>
</dbReference>
<dbReference type="Gramene" id="TraesKARUn01G0133340.1">
    <property type="protein sequence ID" value="cds.TraesKARUn01G0133340.1"/>
    <property type="gene ID" value="TraesKARUn01G0133340"/>
</dbReference>
<dbReference type="Gramene" id="TraesKARUn01G0133530.1">
    <property type="protein sequence ID" value="cds.TraesKARUn01G0133530.1"/>
    <property type="gene ID" value="TraesKARUn01G0133530"/>
</dbReference>
<dbReference type="Gramene" id="TraesKARUn01G0133770.1">
    <property type="protein sequence ID" value="cds.TraesKARUn01G0133770.1"/>
    <property type="gene ID" value="TraesKARUn01G0133770"/>
</dbReference>
<dbReference type="Gramene" id="TraesKARUn01G0133850.1">
    <property type="protein sequence ID" value="cds.TraesKARUn01G0133850.1"/>
    <property type="gene ID" value="TraesKARUn01G0133850"/>
</dbReference>
<dbReference type="Gramene" id="TraesKARUn01G0134100.1">
    <property type="protein sequence ID" value="cds.TraesKARUn01G0134100.1"/>
    <property type="gene ID" value="TraesKARUn01G0134100"/>
</dbReference>
<dbReference type="Gramene" id="TraesKARUn01G0134750.1">
    <property type="protein sequence ID" value="cds.TraesKARUn01G0134750.1"/>
    <property type="gene ID" value="TraesKARUn01G0134750"/>
</dbReference>
<dbReference type="Gramene" id="TraesKARUn01G0135020.1">
    <property type="protein sequence ID" value="cds.TraesKARUn01G0135020.1"/>
    <property type="gene ID" value="TraesKARUn01G0135020"/>
</dbReference>
<dbReference type="Gramene" id="TraesKARUn01G0135500.1">
    <property type="protein sequence ID" value="cds.TraesKARUn01G0135500.1"/>
    <property type="gene ID" value="TraesKARUn01G0135500"/>
</dbReference>
<dbReference type="Gramene" id="TraesKARUn01G0135700.1">
    <property type="protein sequence ID" value="cds.TraesKARUn01G0135700.1"/>
    <property type="gene ID" value="TraesKARUn01G0135700"/>
</dbReference>
<dbReference type="Gramene" id="TraesKARUn01G0135790.1">
    <property type="protein sequence ID" value="cds.TraesKARUn01G0135790.1"/>
    <property type="gene ID" value="TraesKARUn01G0135790"/>
</dbReference>
<dbReference type="Gramene" id="TraesKARUn01G0142420.1">
    <property type="protein sequence ID" value="cds.TraesKARUn01G0142420.1"/>
    <property type="gene ID" value="TraesKARUn01G0142420"/>
</dbReference>
<dbReference type="Gramene" id="TraesKARUn01G0149680.1">
    <property type="protein sequence ID" value="cds.TraesKARUn01G0149680.1"/>
    <property type="gene ID" value="TraesKARUn01G0149680"/>
</dbReference>
<dbReference type="Gramene" id="TraesKARUn01G0154930.1">
    <property type="protein sequence ID" value="cds.TraesKARUn01G0154930.1"/>
    <property type="gene ID" value="TraesKARUn01G0154930"/>
</dbReference>
<dbReference type="Gramene" id="TraesKARUn01G0156080.1">
    <property type="protein sequence ID" value="cds.TraesKARUn01G0156080.1"/>
    <property type="gene ID" value="TraesKARUn01G0156080"/>
</dbReference>
<dbReference type="Gramene" id="TraesKARUn01G0166710.1">
    <property type="protein sequence ID" value="cds.TraesKARUn01G0166710.1"/>
    <property type="gene ID" value="TraesKARUn01G0166710"/>
</dbReference>
<dbReference type="Gramene" id="TraesKARUn01G0171620.1">
    <property type="protein sequence ID" value="cds.TraesKARUn01G0171620.1"/>
    <property type="gene ID" value="TraesKARUn01G0171620"/>
</dbReference>
<dbReference type="Gramene" id="TraesKARUn01G0172400.1">
    <property type="protein sequence ID" value="cds.TraesKARUn01G0172400.1"/>
    <property type="gene ID" value="TraesKARUn01G0172400"/>
</dbReference>
<dbReference type="Gramene" id="TraesKARUn01G0172720.1">
    <property type="protein sequence ID" value="cds.TraesKARUn01G0172720.1"/>
    <property type="gene ID" value="TraesKARUn01G0172720"/>
</dbReference>
<dbReference type="Gramene" id="TraesKARUn01G0173030.1">
    <property type="protein sequence ID" value="cds.TraesKARUn01G0173030.1"/>
    <property type="gene ID" value="TraesKARUn01G0173030"/>
</dbReference>
<dbReference type="Gramene" id="TraesKARUn01G0175810.1">
    <property type="protein sequence ID" value="cds.TraesKARUn01G0175810.1"/>
    <property type="gene ID" value="TraesKARUn01G0175810"/>
</dbReference>
<dbReference type="Gramene" id="TraesKARUn01G0177280.1">
    <property type="protein sequence ID" value="cds.TraesKARUn01G0177280.1"/>
    <property type="gene ID" value="TraesKARUn01G0177280"/>
</dbReference>
<dbReference type="Gramene" id="TraesKARUn01G0177340.1">
    <property type="protein sequence ID" value="cds.TraesKARUn01G0177340.1"/>
    <property type="gene ID" value="TraesKARUn01G0177340"/>
</dbReference>
<dbReference type="Gramene" id="TraesKARUn01G0177520.1">
    <property type="protein sequence ID" value="cds.TraesKARUn01G0177520.1"/>
    <property type="gene ID" value="TraesKARUn01G0177520"/>
</dbReference>
<dbReference type="Gramene" id="TraesKARUn01G0177970.1">
    <property type="protein sequence ID" value="cds.TraesKARUn01G0177970.1"/>
    <property type="gene ID" value="TraesKARUn01G0177970"/>
</dbReference>
<dbReference type="Gramene" id="TraesKARUn01G0179460.1">
    <property type="protein sequence ID" value="cds.TraesKARUn01G0179460.1"/>
    <property type="gene ID" value="TraesKARUn01G0179460"/>
</dbReference>
<dbReference type="Gramene" id="TraesKARUn01G0182750.1">
    <property type="protein sequence ID" value="cds.TraesKARUn01G0182750.1"/>
    <property type="gene ID" value="TraesKARUn01G0182750"/>
</dbReference>
<dbReference type="Gramene" id="TraesKARUn01G0183570.1">
    <property type="protein sequence ID" value="cds.TraesKARUn01G0183570.1"/>
    <property type="gene ID" value="TraesKARUn01G0183570"/>
</dbReference>
<dbReference type="Gramene" id="TraesKARUn01G0183800.1">
    <property type="protein sequence ID" value="cds.TraesKARUn01G0183800.1"/>
    <property type="gene ID" value="TraesKARUn01G0183800"/>
</dbReference>
<dbReference type="Gramene" id="TraesKARUn01G0184000.1">
    <property type="protein sequence ID" value="cds.TraesKARUn01G0184000.1"/>
    <property type="gene ID" value="TraesKARUn01G0184000"/>
</dbReference>
<dbReference type="Gramene" id="TraesKARUn01G0184080.1">
    <property type="protein sequence ID" value="cds.TraesKARUn01G0184080.1"/>
    <property type="gene ID" value="TraesKARUn01G0184080"/>
</dbReference>
<dbReference type="Gramene" id="TraesKARUn01G0184480.1">
    <property type="protein sequence ID" value="cds.TraesKARUn01G0184480.1"/>
    <property type="gene ID" value="TraesKARUn01G0184480"/>
</dbReference>
<dbReference type="Gramene" id="TraesKARUn01G0184690.1">
    <property type="protein sequence ID" value="cds.TraesKARUn01G0184690.1"/>
    <property type="gene ID" value="TraesKARUn01G0184690"/>
</dbReference>
<dbReference type="Gramene" id="TraesKARUn01G0186540.1">
    <property type="protein sequence ID" value="cds.TraesKARUn01G0186540.1"/>
    <property type="gene ID" value="TraesKARUn01G0186540"/>
</dbReference>
<dbReference type="Gramene" id="TraesKARUn01G0187260.1">
    <property type="protein sequence ID" value="cds.TraesKARUn01G0187260.1"/>
    <property type="gene ID" value="TraesKARUn01G0187260"/>
</dbReference>
<dbReference type="Gramene" id="TraesKARUn01G0187480.1">
    <property type="protein sequence ID" value="cds.TraesKARUn01G0187480.1"/>
    <property type="gene ID" value="TraesKARUn01G0187480"/>
</dbReference>
<dbReference type="Gramene" id="TraesKARUn01G0187690.1">
    <property type="protein sequence ID" value="cds.TraesKARUn01G0187690.1"/>
    <property type="gene ID" value="TraesKARUn01G0187690"/>
</dbReference>
<dbReference type="Gramene" id="TraesKARUn01G0188140.1">
    <property type="protein sequence ID" value="cds.TraesKARUn01G0188140.1"/>
    <property type="gene ID" value="TraesKARUn01G0188140"/>
</dbReference>
<dbReference type="Gramene" id="TraesKARUn01G0190940.1">
    <property type="protein sequence ID" value="cds.TraesKARUn01G0190940.1"/>
    <property type="gene ID" value="TraesKARUn01G0190940"/>
</dbReference>
<dbReference type="Gramene" id="TraesKARUn01G0191640.1">
    <property type="protein sequence ID" value="cds.TraesKARUn01G0191640.1"/>
    <property type="gene ID" value="TraesKARUn01G0191640"/>
</dbReference>
<dbReference type="Gramene" id="TraesPARA_EIv1.0_1062700.1">
    <property type="protein sequence ID" value="TraesPARA_EIv1.0_1062700.1.CDS1"/>
    <property type="gene ID" value="TraesPARA_EIv1.0_1062700"/>
</dbReference>
<dbReference type="Gramene" id="TraesPARA_EIv1.0_2645030.1">
    <property type="protein sequence ID" value="TraesPARA_EIv1.0_2645030.1.CDS1"/>
    <property type="gene ID" value="TraesPARA_EIv1.0_2645030"/>
</dbReference>
<dbReference type="Gramene" id="TraesPARA_EIv1.0_2646680.1">
    <property type="protein sequence ID" value="TraesPARA_EIv1.0_2646680.1.CDS1"/>
    <property type="gene ID" value="TraesPARA_EIv1.0_2646680"/>
</dbReference>
<dbReference type="Gramene" id="TraesPARA_EIv1.0_2647220.1">
    <property type="protein sequence ID" value="TraesPARA_EIv1.0_2647220.1.CDS1"/>
    <property type="gene ID" value="TraesPARA_EIv1.0_2647220"/>
</dbReference>
<dbReference type="Gramene" id="TraesPARA_EIv1.0_2647480.1">
    <property type="protein sequence ID" value="TraesPARA_EIv1.0_2647480.1.CDS1"/>
    <property type="gene ID" value="TraesPARA_EIv1.0_2647480"/>
</dbReference>
<dbReference type="Gramene" id="TraesPARA_EIv1.0_2647910.1">
    <property type="protein sequence ID" value="TraesPARA_EIv1.0_2647910.1.CDS1"/>
    <property type="gene ID" value="TraesPARA_EIv1.0_2647910"/>
</dbReference>
<dbReference type="Gramene" id="TraesPARA_EIv1.0_2648030.1">
    <property type="protein sequence ID" value="TraesPARA_EIv1.0_2648030.1.CDS1"/>
    <property type="gene ID" value="TraesPARA_EIv1.0_2648030"/>
</dbReference>
<dbReference type="Gramene" id="TraesPARA_EIv1.0_2648550.1">
    <property type="protein sequence ID" value="TraesPARA_EIv1.0_2648550.1.CDS1"/>
    <property type="gene ID" value="TraesPARA_EIv1.0_2648550"/>
</dbReference>
<dbReference type="Gramene" id="TraesPARA_EIv1.0_2648700.1">
    <property type="protein sequence ID" value="TraesPARA_EIv1.0_2648700.1.CDS1"/>
    <property type="gene ID" value="TraesPARA_EIv1.0_2648700"/>
</dbReference>
<dbReference type="Gramene" id="TraesPARA_EIv1.0_2648950.1">
    <property type="protein sequence ID" value="TraesPARA_EIv1.0_2648950.1.CDS1"/>
    <property type="gene ID" value="TraesPARA_EIv1.0_2648950"/>
</dbReference>
<dbReference type="Gramene" id="TraesPARA_EIv1.0_2649120.1">
    <property type="protein sequence ID" value="TraesPARA_EIv1.0_2649120.1.CDS1"/>
    <property type="gene ID" value="TraesPARA_EIv1.0_2649120"/>
</dbReference>
<dbReference type="Gramene" id="TraesPARA_EIv1.0_2649220.1">
    <property type="protein sequence ID" value="TraesPARA_EIv1.0_2649220.1.CDS1"/>
    <property type="gene ID" value="TraesPARA_EIv1.0_2649220"/>
</dbReference>
<dbReference type="Gramene" id="TraesPARA_EIv1.0_2650240.1">
    <property type="protein sequence ID" value="TraesPARA_EIv1.0_2650240.1.CDS1"/>
    <property type="gene ID" value="TraesPARA_EIv1.0_2650240"/>
</dbReference>
<dbReference type="Gramene" id="TraesPARA_EIv1.0_2650410.1">
    <property type="protein sequence ID" value="TraesPARA_EIv1.0_2650410.1.CDS1"/>
    <property type="gene ID" value="TraesPARA_EIv1.0_2650410"/>
</dbReference>
<dbReference type="Gramene" id="TraesPARA_EIv1.0_2651080.1">
    <property type="protein sequence ID" value="TraesPARA_EIv1.0_2651080.1.CDS1"/>
    <property type="gene ID" value="TraesPARA_EIv1.0_2651080"/>
</dbReference>
<dbReference type="Gramene" id="TraesPARA_EIv1.0_2651460.1">
    <property type="protein sequence ID" value="TraesPARA_EIv1.0_2651460.1.CDS1"/>
    <property type="gene ID" value="TraesPARA_EIv1.0_2651460"/>
</dbReference>
<dbReference type="Gramene" id="TraesPARA_EIv1.0_2652720.1">
    <property type="protein sequence ID" value="TraesPARA_EIv1.0_2652720.1.CDS1"/>
    <property type="gene ID" value="TraesPARA_EIv1.0_2652720"/>
</dbReference>
<dbReference type="Gramene" id="TraesPARA_EIv1.0_2653160.1">
    <property type="protein sequence ID" value="TraesPARA_EIv1.0_2653160.1.CDS1"/>
    <property type="gene ID" value="TraesPARA_EIv1.0_2653160"/>
</dbReference>
<dbReference type="Gramene" id="TraesPARA_EIv1.0_2653990.1">
    <property type="protein sequence ID" value="TraesPARA_EIv1.0_2653990.1.CDS1"/>
    <property type="gene ID" value="TraesPARA_EIv1.0_2653990"/>
</dbReference>
<dbReference type="Gramene" id="TraesPARA_EIv1.0_2654860.1">
    <property type="protein sequence ID" value="TraesPARA_EIv1.0_2654860.1.CDS1"/>
    <property type="gene ID" value="TraesPARA_EIv1.0_2654860"/>
</dbReference>
<dbReference type="Gramene" id="TraesPARA_EIv1.0_2655100.1">
    <property type="protein sequence ID" value="TraesPARA_EIv1.0_2655100.1.CDS1"/>
    <property type="gene ID" value="TraesPARA_EIv1.0_2655100"/>
</dbReference>
<dbReference type="Gramene" id="TraesPARA_EIv1.0_2655490.1">
    <property type="protein sequence ID" value="TraesPARA_EIv1.0_2655490.1.CDS1"/>
    <property type="gene ID" value="TraesPARA_EIv1.0_2655490"/>
</dbReference>
<dbReference type="Gramene" id="TraesPARA_EIv1.0_2655710.1">
    <property type="protein sequence ID" value="TraesPARA_EIv1.0_2655710.1.CDS1"/>
    <property type="gene ID" value="TraesPARA_EIv1.0_2655710"/>
</dbReference>
<dbReference type="Gramene" id="TraesPARA_EIv1.0_2656110.1">
    <property type="protein sequence ID" value="TraesPARA_EIv1.0_2656110.1.CDS1"/>
    <property type="gene ID" value="TraesPARA_EIv1.0_2656110"/>
</dbReference>
<dbReference type="Gramene" id="TraesPARA_EIv1.0_2656400.1">
    <property type="protein sequence ID" value="TraesPARA_EIv1.0_2656400.1.CDS1"/>
    <property type="gene ID" value="TraesPARA_EIv1.0_2656400"/>
</dbReference>
<dbReference type="Gramene" id="TraesPARA_EIv1.0_2656820.1">
    <property type="protein sequence ID" value="TraesPARA_EIv1.0_2656820.1.CDS1"/>
    <property type="gene ID" value="TraesPARA_EIv1.0_2656820"/>
</dbReference>
<dbReference type="Gramene" id="TraesPARA_EIv1.0_2656880.1">
    <property type="protein sequence ID" value="TraesPARA_EIv1.0_2656880.1.CDS1"/>
    <property type="gene ID" value="TraesPARA_EIv1.0_2656880"/>
</dbReference>
<dbReference type="Gramene" id="TraesPARA_EIv1.0_2657130.1">
    <property type="protein sequence ID" value="TraesPARA_EIv1.0_2657130.1.CDS1"/>
    <property type="gene ID" value="TraesPARA_EIv1.0_2657130"/>
</dbReference>
<dbReference type="Gramene" id="TraesPARA_EIv1.0_2658340.1">
    <property type="protein sequence ID" value="TraesPARA_EIv1.0_2658340.1.CDS1"/>
    <property type="gene ID" value="TraesPARA_EIv1.0_2658340"/>
</dbReference>
<dbReference type="Gramene" id="TraesPARA_EIv1.0_2659990.1">
    <property type="protein sequence ID" value="TraesPARA_EIv1.0_2659990.1.CDS1"/>
    <property type="gene ID" value="TraesPARA_EIv1.0_2659990"/>
</dbReference>
<dbReference type="Gramene" id="TraesPARA_EIv1.0_2660210.1">
    <property type="protein sequence ID" value="TraesPARA_EIv1.0_2660210.1.CDS1"/>
    <property type="gene ID" value="TraesPARA_EIv1.0_2660210"/>
</dbReference>
<dbReference type="Gramene" id="TraesPARA_EIv1.0_2662910.1">
    <property type="protein sequence ID" value="TraesPARA_EIv1.0_2662910.1.CDS1"/>
    <property type="gene ID" value="TraesPARA_EIv1.0_2662910"/>
</dbReference>
<dbReference type="Gramene" id="TraesPARA_EIv1.0_2663160.1">
    <property type="protein sequence ID" value="TraesPARA_EIv1.0_2663160.1.CDS1"/>
    <property type="gene ID" value="TraesPARA_EIv1.0_2663160"/>
</dbReference>
<dbReference type="Gramene" id="TraesPARA_EIv1.0_2665760.1">
    <property type="protein sequence ID" value="TraesPARA_EIv1.0_2665760.1.CDS1"/>
    <property type="gene ID" value="TraesPARA_EIv1.0_2665760"/>
</dbReference>
<dbReference type="Gramene" id="TraesPARA_EIv1.0_2666370.1">
    <property type="protein sequence ID" value="TraesPARA_EIv1.0_2666370.1.CDS1"/>
    <property type="gene ID" value="TraesPARA_EIv1.0_2666370"/>
</dbReference>
<dbReference type="Gramene" id="TraesPARA_EIv1.0_2666480.1">
    <property type="protein sequence ID" value="TraesPARA_EIv1.0_2666480.1.CDS1"/>
    <property type="gene ID" value="TraesPARA_EIv1.0_2666480"/>
</dbReference>
<dbReference type="Gramene" id="TraesPARA_EIv1.0_2666640.1">
    <property type="protein sequence ID" value="TraesPARA_EIv1.0_2666640.1.CDS1"/>
    <property type="gene ID" value="TraesPARA_EIv1.0_2666640"/>
</dbReference>
<dbReference type="Gramene" id="TraesPARA_EIv1.0_2666960.1">
    <property type="protein sequence ID" value="TraesPARA_EIv1.0_2666960.1.CDS1"/>
    <property type="gene ID" value="TraesPARA_EIv1.0_2666960"/>
</dbReference>
<dbReference type="Gramene" id="TraesPARA_EIv1.0_2667730.1">
    <property type="protein sequence ID" value="TraesPARA_EIv1.0_2667730.1.CDS1"/>
    <property type="gene ID" value="TraesPARA_EIv1.0_2667730"/>
</dbReference>
<dbReference type="Gramene" id="TraesPARA_EIv1.0_2669260.1">
    <property type="protein sequence ID" value="TraesPARA_EIv1.0_2669260.1.CDS1"/>
    <property type="gene ID" value="TraesPARA_EIv1.0_2669260"/>
</dbReference>
<dbReference type="Gramene" id="TraesPARA_EIv1.0_2670300.1">
    <property type="protein sequence ID" value="TraesPARA_EIv1.0_2670300.1.CDS1"/>
    <property type="gene ID" value="TraesPARA_EIv1.0_2670300"/>
</dbReference>
<dbReference type="Gramene" id="TraesPARA_EIv1.0_2672490.1">
    <property type="protein sequence ID" value="TraesPARA_EIv1.0_2672490.1.CDS1"/>
    <property type="gene ID" value="TraesPARA_EIv1.0_2672490"/>
</dbReference>
<dbReference type="Gramene" id="TraesPARA_EIv1.0_2673220.1">
    <property type="protein sequence ID" value="TraesPARA_EIv1.0_2673220.1.CDS1"/>
    <property type="gene ID" value="TraesPARA_EIv1.0_2673220"/>
</dbReference>
<dbReference type="Gramene" id="TraesPARA_EIv1.0_2673750.1">
    <property type="protein sequence ID" value="TraesPARA_EIv1.0_2673750.1.CDS1"/>
    <property type="gene ID" value="TraesPARA_EIv1.0_2673750"/>
</dbReference>
<dbReference type="Gramene" id="TraesPARA_EIv1.0_2674290.1">
    <property type="protein sequence ID" value="TraesPARA_EIv1.0_2674290.1.CDS1"/>
    <property type="gene ID" value="TraesPARA_EIv1.0_2674290"/>
</dbReference>
<dbReference type="Gramene" id="TraesPARA_EIv1.0_2675160.1">
    <property type="protein sequence ID" value="TraesPARA_EIv1.0_2675160.1.CDS1"/>
    <property type="gene ID" value="TraesPARA_EIv1.0_2675160"/>
</dbReference>
<dbReference type="Gramene" id="TraesPARA_EIv1.0_2675890.1">
    <property type="protein sequence ID" value="TraesPARA_EIv1.0_2675890.1.CDS1"/>
    <property type="gene ID" value="TraesPARA_EIv1.0_2675890"/>
</dbReference>
<dbReference type="Gramene" id="TraesPARA_EIv1.0_2680850.1">
    <property type="protein sequence ID" value="TraesPARA_EIv1.0_2680850.1.CDS1"/>
    <property type="gene ID" value="TraesPARA_EIv1.0_2680850"/>
</dbReference>
<dbReference type="Gramene" id="TraesPARA_EIv1.0_2681470.1">
    <property type="protein sequence ID" value="TraesPARA_EIv1.0_2681470.1.CDS1"/>
    <property type="gene ID" value="TraesPARA_EIv1.0_2681470"/>
</dbReference>
<dbReference type="Gramene" id="TraesRN7A0100046500.1">
    <property type="protein sequence ID" value="TraesRN7A0100046500.1"/>
    <property type="gene ID" value="TraesRN7A0100046500"/>
</dbReference>
<dbReference type="KEGG" id="taes:803115"/>
<dbReference type="eggNOG" id="KOG3301">
    <property type="taxonomic scope" value="Eukaryota"/>
</dbReference>
<dbReference type="HOGENOM" id="CLU_092403_0_5_1"/>
<dbReference type="OMA" id="QLVVELY"/>
<dbReference type="OrthoDB" id="726413at2759"/>
<dbReference type="Proteomes" id="UP000019116">
    <property type="component" value="Chloroplast"/>
</dbReference>
<dbReference type="ExpressionAtlas" id="Q95H61">
    <property type="expression patterns" value="baseline"/>
</dbReference>
<dbReference type="GO" id="GO:0009507">
    <property type="term" value="C:chloroplast"/>
    <property type="evidence" value="ECO:0007669"/>
    <property type="project" value="UniProtKB-SubCell"/>
</dbReference>
<dbReference type="GO" id="GO:0015935">
    <property type="term" value="C:small ribosomal subunit"/>
    <property type="evidence" value="ECO:0000318"/>
    <property type="project" value="GO_Central"/>
</dbReference>
<dbReference type="GO" id="GO:0019843">
    <property type="term" value="F:rRNA binding"/>
    <property type="evidence" value="ECO:0000318"/>
    <property type="project" value="GO_Central"/>
</dbReference>
<dbReference type="GO" id="GO:0003735">
    <property type="term" value="F:structural constituent of ribosome"/>
    <property type="evidence" value="ECO:0000318"/>
    <property type="project" value="GO_Central"/>
</dbReference>
<dbReference type="GO" id="GO:0042274">
    <property type="term" value="P:ribosomal small subunit biogenesis"/>
    <property type="evidence" value="ECO:0000318"/>
    <property type="project" value="GO_Central"/>
</dbReference>
<dbReference type="GO" id="GO:0006412">
    <property type="term" value="P:translation"/>
    <property type="evidence" value="ECO:0007669"/>
    <property type="project" value="UniProtKB-UniRule"/>
</dbReference>
<dbReference type="CDD" id="cd00165">
    <property type="entry name" value="S4"/>
    <property type="match status" value="1"/>
</dbReference>
<dbReference type="FunFam" id="1.10.1050.10:FF:000002">
    <property type="entry name" value="30S ribosomal protein S4, chloroplastic"/>
    <property type="match status" value="1"/>
</dbReference>
<dbReference type="FunFam" id="3.10.290.10:FF:000081">
    <property type="entry name" value="30S ribosomal protein S4, chloroplastic"/>
    <property type="match status" value="1"/>
</dbReference>
<dbReference type="Gene3D" id="1.10.1050.10">
    <property type="entry name" value="Ribosomal Protein S4 Delta 41, Chain A, domain 1"/>
    <property type="match status" value="1"/>
</dbReference>
<dbReference type="Gene3D" id="3.10.290.10">
    <property type="entry name" value="RNA-binding S4 domain"/>
    <property type="match status" value="1"/>
</dbReference>
<dbReference type="HAMAP" id="MF_01306_B">
    <property type="entry name" value="Ribosomal_uS4_B"/>
    <property type="match status" value="1"/>
</dbReference>
<dbReference type="InterPro" id="IPR022801">
    <property type="entry name" value="Ribosomal_uS4"/>
</dbReference>
<dbReference type="InterPro" id="IPR005709">
    <property type="entry name" value="Ribosomal_uS4_bac-type"/>
</dbReference>
<dbReference type="InterPro" id="IPR018079">
    <property type="entry name" value="Ribosomal_uS4_CS"/>
</dbReference>
<dbReference type="InterPro" id="IPR001912">
    <property type="entry name" value="Ribosomal_uS4_N"/>
</dbReference>
<dbReference type="InterPro" id="IPR002942">
    <property type="entry name" value="S4_RNA-bd"/>
</dbReference>
<dbReference type="InterPro" id="IPR036986">
    <property type="entry name" value="S4_RNA-bd_sf"/>
</dbReference>
<dbReference type="NCBIfam" id="NF003717">
    <property type="entry name" value="PRK05327.1"/>
    <property type="match status" value="1"/>
</dbReference>
<dbReference type="NCBIfam" id="TIGR01017">
    <property type="entry name" value="rpsD_bact"/>
    <property type="match status" value="1"/>
</dbReference>
<dbReference type="PANTHER" id="PTHR11831">
    <property type="entry name" value="30S 40S RIBOSOMAL PROTEIN"/>
    <property type="match status" value="1"/>
</dbReference>
<dbReference type="PANTHER" id="PTHR11831:SF4">
    <property type="entry name" value="SMALL RIBOSOMAL SUBUNIT PROTEIN US4M"/>
    <property type="match status" value="1"/>
</dbReference>
<dbReference type="Pfam" id="PF00163">
    <property type="entry name" value="Ribosomal_S4"/>
    <property type="match status" value="1"/>
</dbReference>
<dbReference type="Pfam" id="PF01479">
    <property type="entry name" value="S4"/>
    <property type="match status" value="1"/>
</dbReference>
<dbReference type="SMART" id="SM01390">
    <property type="entry name" value="Ribosomal_S4"/>
    <property type="match status" value="1"/>
</dbReference>
<dbReference type="SMART" id="SM00363">
    <property type="entry name" value="S4"/>
    <property type="match status" value="1"/>
</dbReference>
<dbReference type="SUPFAM" id="SSF55174">
    <property type="entry name" value="Alpha-L RNA-binding motif"/>
    <property type="match status" value="1"/>
</dbReference>
<dbReference type="PROSITE" id="PS00632">
    <property type="entry name" value="RIBOSOMAL_S4"/>
    <property type="match status" value="1"/>
</dbReference>
<dbReference type="PROSITE" id="PS50889">
    <property type="entry name" value="S4"/>
    <property type="match status" value="1"/>
</dbReference>
<feature type="chain" id="PRO_0000132680" description="Small ribosomal subunit protein uS4c">
    <location>
        <begin position="1"/>
        <end position="201"/>
    </location>
</feature>
<feature type="domain" description="S4 RNA-binding">
    <location>
        <begin position="89"/>
        <end position="157"/>
    </location>
</feature>
<geneLocation type="chloroplast"/>
<name>RR4_WHEAT</name>
<accession>Q95H61</accession>
<sequence length="201" mass="23295">MSRYRGPRLKKIRRLGALPGLTRKTPKSGSNLKKKFNSGKKEQYRIRLQEKQKLRFHYGLTERQLLRYVHIAGKAKRSTGQVLLQLLEMRLDNILFRLGMASTIPGARQLVNHRHILVNGRIVNIPSFRCKPRDIITTKDNQRSKGLVQNYIASSDPGKLPKHLAIDTLEYKGLVNKILDRKWVGLKINELLVVEYYSRQT</sequence>
<comment type="function">
    <text evidence="1">One of the primary rRNA binding proteins, it binds directly to 16S rRNA where it nucleates assembly of the body of the 30S subunit.</text>
</comment>
<comment type="function">
    <text evidence="1">With S5 and S12 plays an important role in translational accuracy.</text>
</comment>
<comment type="subunit">
    <text evidence="1">Part of the 30S ribosomal subunit. Contacts protein S5. The interaction surface between S4 and S5 is involved in control of translational fidelity (By similarity).</text>
</comment>
<comment type="subcellular location">
    <subcellularLocation>
        <location>Plastid</location>
        <location>Chloroplast</location>
    </subcellularLocation>
</comment>
<comment type="similarity">
    <text evidence="2">Belongs to the universal ribosomal protein uS4 family.</text>
</comment>
<organism>
    <name type="scientific">Triticum aestivum</name>
    <name type="common">Wheat</name>
    <dbReference type="NCBI Taxonomy" id="4565"/>
    <lineage>
        <taxon>Eukaryota</taxon>
        <taxon>Viridiplantae</taxon>
        <taxon>Streptophyta</taxon>
        <taxon>Embryophyta</taxon>
        <taxon>Tracheophyta</taxon>
        <taxon>Spermatophyta</taxon>
        <taxon>Magnoliopsida</taxon>
        <taxon>Liliopsida</taxon>
        <taxon>Poales</taxon>
        <taxon>Poaceae</taxon>
        <taxon>BOP clade</taxon>
        <taxon>Pooideae</taxon>
        <taxon>Triticodae</taxon>
        <taxon>Triticeae</taxon>
        <taxon>Triticinae</taxon>
        <taxon>Triticum</taxon>
    </lineage>
</organism>
<proteinExistence type="inferred from homology"/>
<keyword id="KW-0150">Chloroplast</keyword>
<keyword id="KW-0934">Plastid</keyword>
<keyword id="KW-1185">Reference proteome</keyword>
<keyword id="KW-0687">Ribonucleoprotein</keyword>
<keyword id="KW-0689">Ribosomal protein</keyword>
<keyword id="KW-0694">RNA-binding</keyword>
<keyword id="KW-0699">rRNA-binding</keyword>